<proteinExistence type="inferred from homology"/>
<feature type="chain" id="PRO_1000120502" description="Polyphosphate kinase">
    <location>
        <begin position="1"/>
        <end position="715"/>
    </location>
</feature>
<feature type="active site" description="Phosphohistidine intermediate" evidence="1">
    <location>
        <position position="440"/>
    </location>
</feature>
<feature type="binding site" evidence="1">
    <location>
        <position position="60"/>
    </location>
    <ligand>
        <name>ATP</name>
        <dbReference type="ChEBI" id="CHEBI:30616"/>
    </ligand>
</feature>
<feature type="binding site" evidence="1">
    <location>
        <position position="380"/>
    </location>
    <ligand>
        <name>Mg(2+)</name>
        <dbReference type="ChEBI" id="CHEBI:18420"/>
    </ligand>
</feature>
<feature type="binding site" evidence="1">
    <location>
        <position position="410"/>
    </location>
    <ligand>
        <name>Mg(2+)</name>
        <dbReference type="ChEBI" id="CHEBI:18420"/>
    </ligand>
</feature>
<feature type="binding site" evidence="1">
    <location>
        <position position="473"/>
    </location>
    <ligand>
        <name>ATP</name>
        <dbReference type="ChEBI" id="CHEBI:30616"/>
    </ligand>
</feature>
<feature type="binding site" evidence="1">
    <location>
        <position position="569"/>
    </location>
    <ligand>
        <name>ATP</name>
        <dbReference type="ChEBI" id="CHEBI:30616"/>
    </ligand>
</feature>
<feature type="binding site" evidence="1">
    <location>
        <position position="597"/>
    </location>
    <ligand>
        <name>ATP</name>
        <dbReference type="ChEBI" id="CHEBI:30616"/>
    </ligand>
</feature>
<protein>
    <recommendedName>
        <fullName evidence="1">Polyphosphate kinase</fullName>
        <ecNumber evidence="1">2.7.4.1</ecNumber>
    </recommendedName>
    <alternativeName>
        <fullName evidence="1">ATP-polyphosphate phosphotransferase</fullName>
    </alternativeName>
    <alternativeName>
        <fullName evidence="1">Polyphosphoric acid kinase</fullName>
    </alternativeName>
</protein>
<name>PPK1_ERYLH</name>
<reference key="1">
    <citation type="journal article" date="2009" name="J. Bacteriol.">
        <title>Complete genome sequence of Erythrobacter litoralis HTCC2594.</title>
        <authorList>
            <person name="Oh H.M."/>
            <person name="Giovannoni S.J."/>
            <person name="Ferriera S."/>
            <person name="Johnson J."/>
            <person name="Cho J.C."/>
        </authorList>
    </citation>
    <scope>NUCLEOTIDE SEQUENCE [LARGE SCALE GENOMIC DNA]</scope>
    <source>
        <strain>HTCC2594</strain>
    </source>
</reference>
<gene>
    <name evidence="1" type="primary">ppk</name>
    <name type="ordered locus">ELI_03250</name>
</gene>
<accession>Q2NC49</accession>
<keyword id="KW-0067">ATP-binding</keyword>
<keyword id="KW-0418">Kinase</keyword>
<keyword id="KW-0460">Magnesium</keyword>
<keyword id="KW-0479">Metal-binding</keyword>
<keyword id="KW-0547">Nucleotide-binding</keyword>
<keyword id="KW-0597">Phosphoprotein</keyword>
<keyword id="KW-1185">Reference proteome</keyword>
<keyword id="KW-0808">Transferase</keyword>
<sequence>MGSHPITQDNDLDPPTEPGERYFNRELSWLAFNDRVLAEACNDSYPLLERLRFLSISGSNLDEFVMIRVAGLVGQVQRGIDEVSDDGRSPREQLNAVVARLEELSERQQDIWRNLRVQLADAGVHVADEERVNAEAYGWLKQHFFESILPLLTPQALDPAHPFPFISNEGLGLLFTLRRGGEELVEMVLIPSALPRFIRVPGEDALYISIESLITRFAKELFPGFEIVGDGTFRVLRDSDIEIQEEAEDLVRTFRSAIQRRRRGQVIQLEIEEEFDPTAEALLREKLDTPGATFVKTDGMLGIAGLADIVDEDRPDLKFDSYSPRYPERVLEHDGDIFAAIREKDIVIHHPYESFNVVVDFIRRAAIDPDVVAIKQALYRAGTQSEVVDALVEAAENGKSVTAVVELKARFDEEQNLYWANKLERAGVQVIYGFVDWKTHAKVAMVVRREEEGFRTYCHFGTGNYHPITAKIYTDLSYFTADPRLGRDAAKLFNFVTGYVEPRELEMLAVSPIDLRETIYAAIDNEMVNAQAGKPAAIWMKMNQITDVDMIDRLYEASQAGVEIQLVVRGICNLRPGVPGMSDNIRVKSIIGRFLEHSRIYAFANGEPMPGTSSTVYISSADLMVRNLDRRVEQLVPIDNQTVHDQVLQQVLLANLLDNEQSWELQPDGSYFRVEVGEKSFNCHRYFMTNPSLSGRGGALEAGAVPKLALRKGAV</sequence>
<organism>
    <name type="scientific">Erythrobacter litoralis (strain HTCC2594)</name>
    <dbReference type="NCBI Taxonomy" id="314225"/>
    <lineage>
        <taxon>Bacteria</taxon>
        <taxon>Pseudomonadati</taxon>
        <taxon>Pseudomonadota</taxon>
        <taxon>Alphaproteobacteria</taxon>
        <taxon>Sphingomonadales</taxon>
        <taxon>Erythrobacteraceae</taxon>
        <taxon>Erythrobacter/Porphyrobacter group</taxon>
        <taxon>Erythrobacter</taxon>
    </lineage>
</organism>
<comment type="function">
    <text evidence="1">Catalyzes the reversible transfer of the terminal phosphate of ATP to form a long-chain polyphosphate (polyP).</text>
</comment>
<comment type="catalytic activity">
    <reaction evidence="1">
        <text>[phosphate](n) + ATP = [phosphate](n+1) + ADP</text>
        <dbReference type="Rhea" id="RHEA:19573"/>
        <dbReference type="Rhea" id="RHEA-COMP:9859"/>
        <dbReference type="Rhea" id="RHEA-COMP:14280"/>
        <dbReference type="ChEBI" id="CHEBI:16838"/>
        <dbReference type="ChEBI" id="CHEBI:30616"/>
        <dbReference type="ChEBI" id="CHEBI:456216"/>
        <dbReference type="EC" id="2.7.4.1"/>
    </reaction>
</comment>
<comment type="cofactor">
    <cofactor evidence="1">
        <name>Mg(2+)</name>
        <dbReference type="ChEBI" id="CHEBI:18420"/>
    </cofactor>
</comment>
<comment type="PTM">
    <text evidence="1">An intermediate of this reaction is the autophosphorylated ppk in which a phosphate is covalently linked to a histidine residue through a N-P bond.</text>
</comment>
<comment type="similarity">
    <text evidence="1">Belongs to the polyphosphate kinase 1 (PPK1) family.</text>
</comment>
<evidence type="ECO:0000255" key="1">
    <source>
        <dbReference type="HAMAP-Rule" id="MF_00347"/>
    </source>
</evidence>
<dbReference type="EC" id="2.7.4.1" evidence="1"/>
<dbReference type="EMBL" id="CP000157">
    <property type="protein sequence ID" value="ABC62742.1"/>
    <property type="molecule type" value="Genomic_DNA"/>
</dbReference>
<dbReference type="RefSeq" id="WP_011413618.1">
    <property type="nucleotide sequence ID" value="NC_007722.1"/>
</dbReference>
<dbReference type="SMR" id="Q2NC49"/>
<dbReference type="STRING" id="314225.ELI_03250"/>
<dbReference type="KEGG" id="eli:ELI_03250"/>
<dbReference type="eggNOG" id="COG0855">
    <property type="taxonomic scope" value="Bacteria"/>
</dbReference>
<dbReference type="HOGENOM" id="CLU_009678_5_0_5"/>
<dbReference type="OrthoDB" id="9761456at2"/>
<dbReference type="Proteomes" id="UP000008808">
    <property type="component" value="Chromosome"/>
</dbReference>
<dbReference type="GO" id="GO:0009358">
    <property type="term" value="C:polyphosphate kinase complex"/>
    <property type="evidence" value="ECO:0007669"/>
    <property type="project" value="InterPro"/>
</dbReference>
<dbReference type="GO" id="GO:0005524">
    <property type="term" value="F:ATP binding"/>
    <property type="evidence" value="ECO:0007669"/>
    <property type="project" value="UniProtKB-KW"/>
</dbReference>
<dbReference type="GO" id="GO:0046872">
    <property type="term" value="F:metal ion binding"/>
    <property type="evidence" value="ECO:0007669"/>
    <property type="project" value="UniProtKB-KW"/>
</dbReference>
<dbReference type="GO" id="GO:0008976">
    <property type="term" value="F:polyphosphate kinase activity"/>
    <property type="evidence" value="ECO:0007669"/>
    <property type="project" value="UniProtKB-UniRule"/>
</dbReference>
<dbReference type="GO" id="GO:0006799">
    <property type="term" value="P:polyphosphate biosynthetic process"/>
    <property type="evidence" value="ECO:0007669"/>
    <property type="project" value="UniProtKB-UniRule"/>
</dbReference>
<dbReference type="CDD" id="cd09165">
    <property type="entry name" value="PLDc_PaPPK1_C1_like"/>
    <property type="match status" value="1"/>
</dbReference>
<dbReference type="CDD" id="cd09168">
    <property type="entry name" value="PLDc_PaPPK1_C2_like"/>
    <property type="match status" value="1"/>
</dbReference>
<dbReference type="Gene3D" id="3.30.870.10">
    <property type="entry name" value="Endonuclease Chain A"/>
    <property type="match status" value="2"/>
</dbReference>
<dbReference type="Gene3D" id="3.30.1840.10">
    <property type="entry name" value="Polyphosphate kinase middle domain"/>
    <property type="match status" value="1"/>
</dbReference>
<dbReference type="Gene3D" id="1.20.58.310">
    <property type="entry name" value="Polyphosphate kinase N-terminal domain"/>
    <property type="match status" value="1"/>
</dbReference>
<dbReference type="HAMAP" id="MF_00347">
    <property type="entry name" value="Polyphosphate_kinase"/>
    <property type="match status" value="1"/>
</dbReference>
<dbReference type="InterPro" id="IPR003414">
    <property type="entry name" value="PP_kinase"/>
</dbReference>
<dbReference type="InterPro" id="IPR041108">
    <property type="entry name" value="PP_kinase_C_1"/>
</dbReference>
<dbReference type="InterPro" id="IPR024953">
    <property type="entry name" value="PP_kinase_middle"/>
</dbReference>
<dbReference type="InterPro" id="IPR036830">
    <property type="entry name" value="PP_kinase_middle_dom_sf"/>
</dbReference>
<dbReference type="InterPro" id="IPR025200">
    <property type="entry name" value="PPK_C_dom2"/>
</dbReference>
<dbReference type="InterPro" id="IPR025198">
    <property type="entry name" value="PPK_N_dom"/>
</dbReference>
<dbReference type="InterPro" id="IPR036832">
    <property type="entry name" value="PPK_N_dom_sf"/>
</dbReference>
<dbReference type="NCBIfam" id="TIGR03705">
    <property type="entry name" value="poly_P_kin"/>
    <property type="match status" value="1"/>
</dbReference>
<dbReference type="NCBIfam" id="NF003917">
    <property type="entry name" value="PRK05443.1-1"/>
    <property type="match status" value="1"/>
</dbReference>
<dbReference type="NCBIfam" id="NF003918">
    <property type="entry name" value="PRK05443.1-2"/>
    <property type="match status" value="1"/>
</dbReference>
<dbReference type="NCBIfam" id="NF003919">
    <property type="entry name" value="PRK05443.1-4"/>
    <property type="match status" value="1"/>
</dbReference>
<dbReference type="NCBIfam" id="NF003921">
    <property type="entry name" value="PRK05443.2-2"/>
    <property type="match status" value="1"/>
</dbReference>
<dbReference type="PANTHER" id="PTHR30218">
    <property type="entry name" value="POLYPHOSPHATE KINASE"/>
    <property type="match status" value="1"/>
</dbReference>
<dbReference type="PANTHER" id="PTHR30218:SF0">
    <property type="entry name" value="POLYPHOSPHATE KINASE"/>
    <property type="match status" value="1"/>
</dbReference>
<dbReference type="Pfam" id="PF02503">
    <property type="entry name" value="PP_kinase"/>
    <property type="match status" value="1"/>
</dbReference>
<dbReference type="Pfam" id="PF13090">
    <property type="entry name" value="PP_kinase_C"/>
    <property type="match status" value="1"/>
</dbReference>
<dbReference type="Pfam" id="PF17941">
    <property type="entry name" value="PP_kinase_C_1"/>
    <property type="match status" value="1"/>
</dbReference>
<dbReference type="Pfam" id="PF13089">
    <property type="entry name" value="PP_kinase_N"/>
    <property type="match status" value="1"/>
</dbReference>
<dbReference type="PIRSF" id="PIRSF015589">
    <property type="entry name" value="PP_kinase"/>
    <property type="match status" value="1"/>
</dbReference>
<dbReference type="SUPFAM" id="SSF56024">
    <property type="entry name" value="Phospholipase D/nuclease"/>
    <property type="match status" value="2"/>
</dbReference>
<dbReference type="SUPFAM" id="SSF143724">
    <property type="entry name" value="PHP14-like"/>
    <property type="match status" value="1"/>
</dbReference>
<dbReference type="SUPFAM" id="SSF140356">
    <property type="entry name" value="PPK N-terminal domain-like"/>
    <property type="match status" value="1"/>
</dbReference>